<feature type="chain" id="PRO_0000193495" description="ATP synthase subunit delta">
    <location>
        <begin position="1"/>
        <end position="185"/>
    </location>
</feature>
<comment type="function">
    <text evidence="1">F(1)F(0) ATP synthase produces ATP from ADP in the presence of a proton or sodium gradient. F-type ATPases consist of two structural domains, F(1) containing the extramembraneous catalytic core and F(0) containing the membrane proton channel, linked together by a central stalk and a peripheral stalk. During catalysis, ATP synthesis in the catalytic domain of F(1) is coupled via a rotary mechanism of the central stalk subunits to proton translocation.</text>
</comment>
<comment type="function">
    <text evidence="1">This protein is part of the stalk that links CF(0) to CF(1). It either transmits conformational changes from CF(0) to CF(1) or is implicated in proton conduction.</text>
</comment>
<comment type="subunit">
    <text evidence="1">F-type ATPases have 2 components, F(1) - the catalytic core - and F(0) - the membrane proton channel. F(1) has five subunits: alpha(3), beta(3), gamma(1), delta(1), epsilon(1). CF(0) has four main subunits: a(1), b(1), b'(1) and c(10-14). The alpha and beta chains form an alternating ring which encloses part of the gamma chain. F(1) is attached to F(0) by a central stalk formed by the gamma and epsilon chains, while a peripheral stalk is formed by the delta, b and b' chains.</text>
</comment>
<comment type="subcellular location">
    <subcellularLocation>
        <location evidence="1">Cellular thylakoid membrane</location>
        <topology evidence="1">Peripheral membrane protein</topology>
    </subcellularLocation>
</comment>
<comment type="similarity">
    <text evidence="1">Belongs to the ATPase delta chain family.</text>
</comment>
<keyword id="KW-0066">ATP synthesis</keyword>
<keyword id="KW-0139">CF(1)</keyword>
<keyword id="KW-0375">Hydrogen ion transport</keyword>
<keyword id="KW-0406">Ion transport</keyword>
<keyword id="KW-0472">Membrane</keyword>
<keyword id="KW-1185">Reference proteome</keyword>
<keyword id="KW-0793">Thylakoid</keyword>
<keyword id="KW-0813">Transport</keyword>
<reference key="1">
    <citation type="journal article" date="1991" name="Plant Mol. Biol.">
        <title>The atp1 and atp2 operons of the cyanobacterium Synechocystis sp. PCC 6803.</title>
        <authorList>
            <person name="Lill H."/>
            <person name="Nelson N."/>
        </authorList>
    </citation>
    <scope>NUCLEOTIDE SEQUENCE [GENOMIC DNA]</scope>
</reference>
<reference key="2">
    <citation type="journal article" date="1996" name="DNA Res.">
        <title>Sequence analysis of the genome of the unicellular cyanobacterium Synechocystis sp. strain PCC6803. II. Sequence determination of the entire genome and assignment of potential protein-coding regions.</title>
        <authorList>
            <person name="Kaneko T."/>
            <person name="Sato S."/>
            <person name="Kotani H."/>
            <person name="Tanaka A."/>
            <person name="Asamizu E."/>
            <person name="Nakamura Y."/>
            <person name="Miyajima N."/>
            <person name="Hirosawa M."/>
            <person name="Sugiura M."/>
            <person name="Sasamoto S."/>
            <person name="Kimura T."/>
            <person name="Hosouchi T."/>
            <person name="Matsuno A."/>
            <person name="Muraki A."/>
            <person name="Nakazaki N."/>
            <person name="Naruo K."/>
            <person name="Okumura S."/>
            <person name="Shimpo S."/>
            <person name="Takeuchi C."/>
            <person name="Wada T."/>
            <person name="Watanabe A."/>
            <person name="Yamada M."/>
            <person name="Yasuda M."/>
            <person name="Tabata S."/>
        </authorList>
    </citation>
    <scope>NUCLEOTIDE SEQUENCE [LARGE SCALE GENOMIC DNA]</scope>
    <source>
        <strain>ATCC 27184 / PCC 6803 / Kazusa</strain>
    </source>
</reference>
<accession>P27180</accession>
<gene>
    <name evidence="1" type="primary">atpH</name>
    <name evidence="1" type="synonym">atpD</name>
    <name type="ordered locus">sll1325</name>
</gene>
<dbReference type="EMBL" id="X58128">
    <property type="protein sequence ID" value="CAA41134.1"/>
    <property type="molecule type" value="Genomic_DNA"/>
</dbReference>
<dbReference type="EMBL" id="BA000022">
    <property type="protein sequence ID" value="BAA16736.1"/>
    <property type="molecule type" value="Genomic_DNA"/>
</dbReference>
<dbReference type="PIR" id="S17750">
    <property type="entry name" value="PWYBD"/>
</dbReference>
<dbReference type="SMR" id="P27180"/>
<dbReference type="FunCoup" id="P27180">
    <property type="interactions" value="460"/>
</dbReference>
<dbReference type="IntAct" id="P27180">
    <property type="interactions" value="1"/>
</dbReference>
<dbReference type="STRING" id="1148.gene:10497591"/>
<dbReference type="PaxDb" id="1148-1651809"/>
<dbReference type="EnsemblBacteria" id="BAA16736">
    <property type="protein sequence ID" value="BAA16736"/>
    <property type="gene ID" value="BAA16736"/>
</dbReference>
<dbReference type="KEGG" id="syn:sll1325"/>
<dbReference type="eggNOG" id="COG0712">
    <property type="taxonomic scope" value="Bacteria"/>
</dbReference>
<dbReference type="InParanoid" id="P27180"/>
<dbReference type="PhylomeDB" id="P27180"/>
<dbReference type="Proteomes" id="UP000001425">
    <property type="component" value="Chromosome"/>
</dbReference>
<dbReference type="GO" id="GO:0005886">
    <property type="term" value="C:plasma membrane"/>
    <property type="evidence" value="ECO:0000314"/>
    <property type="project" value="UniProtKB"/>
</dbReference>
<dbReference type="GO" id="GO:0031676">
    <property type="term" value="C:plasma membrane-derived thylakoid membrane"/>
    <property type="evidence" value="ECO:0007669"/>
    <property type="project" value="UniProtKB-SubCell"/>
</dbReference>
<dbReference type="GO" id="GO:0045259">
    <property type="term" value="C:proton-transporting ATP synthase complex"/>
    <property type="evidence" value="ECO:0000314"/>
    <property type="project" value="UniProtKB"/>
</dbReference>
<dbReference type="GO" id="GO:0046933">
    <property type="term" value="F:proton-transporting ATP synthase activity, rotational mechanism"/>
    <property type="evidence" value="ECO:0007669"/>
    <property type="project" value="UniProtKB-UniRule"/>
</dbReference>
<dbReference type="GO" id="GO:0015986">
    <property type="term" value="P:proton motive force-driven ATP synthesis"/>
    <property type="evidence" value="ECO:0000318"/>
    <property type="project" value="GO_Central"/>
</dbReference>
<dbReference type="Gene3D" id="1.10.520.20">
    <property type="entry name" value="N-terminal domain of the delta subunit of the F1F0-ATP synthase"/>
    <property type="match status" value="1"/>
</dbReference>
<dbReference type="HAMAP" id="MF_01416">
    <property type="entry name" value="ATP_synth_delta_bact"/>
    <property type="match status" value="1"/>
</dbReference>
<dbReference type="InterPro" id="IPR026015">
    <property type="entry name" value="ATP_synth_OSCP/delta_N_sf"/>
</dbReference>
<dbReference type="InterPro" id="IPR020781">
    <property type="entry name" value="ATPase_OSCP/d_CS"/>
</dbReference>
<dbReference type="InterPro" id="IPR000711">
    <property type="entry name" value="ATPase_OSCP/dsu"/>
</dbReference>
<dbReference type="NCBIfam" id="TIGR01145">
    <property type="entry name" value="ATP_synt_delta"/>
    <property type="match status" value="1"/>
</dbReference>
<dbReference type="PANTHER" id="PTHR11910">
    <property type="entry name" value="ATP SYNTHASE DELTA CHAIN"/>
    <property type="match status" value="1"/>
</dbReference>
<dbReference type="Pfam" id="PF00213">
    <property type="entry name" value="OSCP"/>
    <property type="match status" value="1"/>
</dbReference>
<dbReference type="PRINTS" id="PR00125">
    <property type="entry name" value="ATPASEDELTA"/>
</dbReference>
<dbReference type="SUPFAM" id="SSF47928">
    <property type="entry name" value="N-terminal domain of the delta subunit of the F1F0-ATP synthase"/>
    <property type="match status" value="1"/>
</dbReference>
<dbReference type="PROSITE" id="PS00389">
    <property type="entry name" value="ATPASE_DELTA"/>
    <property type="match status" value="1"/>
</dbReference>
<evidence type="ECO:0000255" key="1">
    <source>
        <dbReference type="HAMAP-Rule" id="MF_01416"/>
    </source>
</evidence>
<name>ATPD_SYNY3</name>
<proteinExistence type="inferred from homology"/>
<protein>
    <recommendedName>
        <fullName evidence="1">ATP synthase subunit delta</fullName>
    </recommendedName>
    <alternativeName>
        <fullName evidence="1">ATP synthase F(1) sector subunit delta</fullName>
    </alternativeName>
    <alternativeName>
        <fullName evidence="1">F-type ATPase subunit delta</fullName>
        <shortName evidence="1">F-ATPase subunit delta</shortName>
    </alternativeName>
</protein>
<sequence length="185" mass="20093">MKGSLYSSKIAEPYAQALIGLAQQQNLTEVFGDNLRSLLTLLQDSPDLSAVLSSPVVKDEDKKSVLRSVLGDGGNGYLLNFLMLLVDKRRIVFLEAICEQYLALLRQFTNTVLAEVTSALKLTDAQKDQVKERVKQLTGAQAVELETKVDGDILGGIVIKVGSQVFDSSLRGQLRRVGLSLGTAL</sequence>
<organism>
    <name type="scientific">Synechocystis sp. (strain ATCC 27184 / PCC 6803 / Kazusa)</name>
    <dbReference type="NCBI Taxonomy" id="1111708"/>
    <lineage>
        <taxon>Bacteria</taxon>
        <taxon>Bacillati</taxon>
        <taxon>Cyanobacteriota</taxon>
        <taxon>Cyanophyceae</taxon>
        <taxon>Synechococcales</taxon>
        <taxon>Merismopediaceae</taxon>
        <taxon>Synechocystis</taxon>
    </lineage>
</organism>